<feature type="chain" id="PRO_1000122098" description="Exodeoxyribonuclease 7 large subunit">
    <location>
        <begin position="1"/>
        <end position="401"/>
    </location>
</feature>
<gene>
    <name evidence="1" type="primary">xseA</name>
    <name type="ordered locus">Teth514_1536</name>
</gene>
<name>EX7L_THEPX</name>
<evidence type="ECO:0000255" key="1">
    <source>
        <dbReference type="HAMAP-Rule" id="MF_00378"/>
    </source>
</evidence>
<protein>
    <recommendedName>
        <fullName evidence="1">Exodeoxyribonuclease 7 large subunit</fullName>
        <ecNumber evidence="1">3.1.11.6</ecNumber>
    </recommendedName>
    <alternativeName>
        <fullName evidence="1">Exodeoxyribonuclease VII large subunit</fullName>
        <shortName evidence="1">Exonuclease VII large subunit</shortName>
    </alternativeName>
</protein>
<sequence>MQLKALEVREITDYIKKMMDNDIILRNVRVKGEISNLKYHSTGIYFTLKDEIASLKCVMFNEYGKLLNFTLQDGMSVIVTGRISVYERNGTYQLYAQSIQSDGIGALYFAFNKLKEKLQKEGLFDSDKKKPIPKHPKKIAVVTSPTGAVIRDIITISRRRNPTVDILVVPVLVQGSSAADEICNAFRILNKREDIDVIILARGGGSLEEIWPFNEEKVARCIYASRIPVVSAVGHETDFTISDFVADLRAPTPSAAAEIVVPDIKVYQRELFLLKTKLLTLMTAELNRKKKEFEGLKRALYLNSPTKKSEILRHKVENLTASLYNEMLSIYQHKRNDFLILAEKLNSLSPLKVLTRGYTIVLDKQEKVISSVRDIKPYDEIKILFKDGKAKAIVQEVKENE</sequence>
<dbReference type="EC" id="3.1.11.6" evidence="1"/>
<dbReference type="EMBL" id="CP000923">
    <property type="protein sequence ID" value="ABY92823.1"/>
    <property type="molecule type" value="Genomic_DNA"/>
</dbReference>
<dbReference type="RefSeq" id="WP_009052333.1">
    <property type="nucleotide sequence ID" value="NC_010320.1"/>
</dbReference>
<dbReference type="SMR" id="B0K0U8"/>
<dbReference type="KEGG" id="tex:Teth514_1536"/>
<dbReference type="HOGENOM" id="CLU_023625_3_1_9"/>
<dbReference type="Proteomes" id="UP000002155">
    <property type="component" value="Chromosome"/>
</dbReference>
<dbReference type="GO" id="GO:0005737">
    <property type="term" value="C:cytoplasm"/>
    <property type="evidence" value="ECO:0007669"/>
    <property type="project" value="UniProtKB-SubCell"/>
</dbReference>
<dbReference type="GO" id="GO:0009318">
    <property type="term" value="C:exodeoxyribonuclease VII complex"/>
    <property type="evidence" value="ECO:0007669"/>
    <property type="project" value="InterPro"/>
</dbReference>
<dbReference type="GO" id="GO:0008855">
    <property type="term" value="F:exodeoxyribonuclease VII activity"/>
    <property type="evidence" value="ECO:0007669"/>
    <property type="project" value="UniProtKB-UniRule"/>
</dbReference>
<dbReference type="GO" id="GO:0003676">
    <property type="term" value="F:nucleic acid binding"/>
    <property type="evidence" value="ECO:0007669"/>
    <property type="project" value="InterPro"/>
</dbReference>
<dbReference type="GO" id="GO:0006308">
    <property type="term" value="P:DNA catabolic process"/>
    <property type="evidence" value="ECO:0007669"/>
    <property type="project" value="UniProtKB-UniRule"/>
</dbReference>
<dbReference type="CDD" id="cd04489">
    <property type="entry name" value="ExoVII_LU_OBF"/>
    <property type="match status" value="1"/>
</dbReference>
<dbReference type="HAMAP" id="MF_00378">
    <property type="entry name" value="Exonuc_7_L"/>
    <property type="match status" value="1"/>
</dbReference>
<dbReference type="InterPro" id="IPR003753">
    <property type="entry name" value="Exonuc_VII_L"/>
</dbReference>
<dbReference type="InterPro" id="IPR020579">
    <property type="entry name" value="Exonuc_VII_lsu_C"/>
</dbReference>
<dbReference type="InterPro" id="IPR012340">
    <property type="entry name" value="NA-bd_OB-fold"/>
</dbReference>
<dbReference type="InterPro" id="IPR025824">
    <property type="entry name" value="OB-fold_nuc-bd_dom"/>
</dbReference>
<dbReference type="NCBIfam" id="TIGR00237">
    <property type="entry name" value="xseA"/>
    <property type="match status" value="1"/>
</dbReference>
<dbReference type="PANTHER" id="PTHR30008">
    <property type="entry name" value="EXODEOXYRIBONUCLEASE 7 LARGE SUBUNIT"/>
    <property type="match status" value="1"/>
</dbReference>
<dbReference type="PANTHER" id="PTHR30008:SF0">
    <property type="entry name" value="EXODEOXYRIBONUCLEASE 7 LARGE SUBUNIT"/>
    <property type="match status" value="1"/>
</dbReference>
<dbReference type="Pfam" id="PF02601">
    <property type="entry name" value="Exonuc_VII_L"/>
    <property type="match status" value="2"/>
</dbReference>
<dbReference type="Pfam" id="PF13742">
    <property type="entry name" value="tRNA_anti_2"/>
    <property type="match status" value="1"/>
</dbReference>
<dbReference type="SUPFAM" id="SSF50249">
    <property type="entry name" value="Nucleic acid-binding proteins"/>
    <property type="match status" value="1"/>
</dbReference>
<reference key="1">
    <citation type="submission" date="2008-01" db="EMBL/GenBank/DDBJ databases">
        <title>Complete sequence of Thermoanaerobacter sp. X514.</title>
        <authorList>
            <consortium name="US DOE Joint Genome Institute"/>
            <person name="Copeland A."/>
            <person name="Lucas S."/>
            <person name="Lapidus A."/>
            <person name="Barry K."/>
            <person name="Glavina del Rio T."/>
            <person name="Dalin E."/>
            <person name="Tice H."/>
            <person name="Pitluck S."/>
            <person name="Bruce D."/>
            <person name="Goodwin L."/>
            <person name="Saunders E."/>
            <person name="Brettin T."/>
            <person name="Detter J.C."/>
            <person name="Han C."/>
            <person name="Schmutz J."/>
            <person name="Larimer F."/>
            <person name="Land M."/>
            <person name="Hauser L."/>
            <person name="Kyrpides N."/>
            <person name="Kim E."/>
            <person name="Hemme C."/>
            <person name="Fields M.W."/>
            <person name="He Z."/>
            <person name="Zhou J."/>
            <person name="Richardson P."/>
        </authorList>
    </citation>
    <scope>NUCLEOTIDE SEQUENCE [LARGE SCALE GENOMIC DNA]</scope>
    <source>
        <strain>X514</strain>
    </source>
</reference>
<organism>
    <name type="scientific">Thermoanaerobacter sp. (strain X514)</name>
    <dbReference type="NCBI Taxonomy" id="399726"/>
    <lineage>
        <taxon>Bacteria</taxon>
        <taxon>Bacillati</taxon>
        <taxon>Bacillota</taxon>
        <taxon>Clostridia</taxon>
        <taxon>Thermoanaerobacterales</taxon>
        <taxon>Thermoanaerobacteraceae</taxon>
        <taxon>Thermoanaerobacter</taxon>
    </lineage>
</organism>
<accession>B0K0U8</accession>
<keyword id="KW-0963">Cytoplasm</keyword>
<keyword id="KW-0269">Exonuclease</keyword>
<keyword id="KW-0378">Hydrolase</keyword>
<keyword id="KW-0540">Nuclease</keyword>
<proteinExistence type="inferred from homology"/>
<comment type="function">
    <text evidence="1">Bidirectionally degrades single-stranded DNA into large acid-insoluble oligonucleotides, which are then degraded further into small acid-soluble oligonucleotides.</text>
</comment>
<comment type="catalytic activity">
    <reaction evidence="1">
        <text>Exonucleolytic cleavage in either 5'- to 3'- or 3'- to 5'-direction to yield nucleoside 5'-phosphates.</text>
        <dbReference type="EC" id="3.1.11.6"/>
    </reaction>
</comment>
<comment type="subunit">
    <text evidence="1">Heterooligomer composed of large and small subunits.</text>
</comment>
<comment type="subcellular location">
    <subcellularLocation>
        <location evidence="1">Cytoplasm</location>
    </subcellularLocation>
</comment>
<comment type="similarity">
    <text evidence="1">Belongs to the XseA family.</text>
</comment>